<keyword id="KW-0004">4Fe-4S</keyword>
<keyword id="KW-0903">Direct protein sequencing</keyword>
<keyword id="KW-0285">Flavoprotein</keyword>
<keyword id="KW-0288">FMN</keyword>
<keyword id="KW-0408">Iron</keyword>
<keyword id="KW-0411">Iron-sulfur</keyword>
<keyword id="KW-0479">Metal-binding</keyword>
<keyword id="KW-1185">Reference proteome</keyword>
<evidence type="ECO:0000250" key="1"/>
<evidence type="ECO:0000269" key="2">
    <source>
    </source>
</evidence>
<evidence type="ECO:0000305" key="3"/>
<evidence type="ECO:0000305" key="4">
    <source>
    </source>
</evidence>
<proteinExistence type="evidence at protein level"/>
<comment type="function">
    <text>Redox-active protein probably involved in electron transport.</text>
</comment>
<comment type="cofactor">
    <cofactor evidence="2">
        <name>FMN</name>
        <dbReference type="ChEBI" id="CHEBI:58210"/>
    </cofactor>
    <text evidence="2">Binds 1 FMN per subunit.</text>
</comment>
<comment type="cofactor">
    <cofactor evidence="4">
        <name>[4Fe-4S] cluster</name>
        <dbReference type="ChEBI" id="CHEBI:49883"/>
    </cofactor>
    <text evidence="4">Binds 1 [4Fe-4S] cluster per subunit.</text>
</comment>
<comment type="subunit">
    <text>Homodimer.</text>
</comment>
<comment type="similarity">
    <text evidence="3">Belongs to the SsuE family. Isf subfamily.</text>
</comment>
<name>ISF3_ARCFU</name>
<protein>
    <recommendedName>
        <fullName>Iron-sulfur flavoprotein AF_1896</fullName>
    </recommendedName>
    <alternativeName>
        <fullName>AF-3</fullName>
        <shortName>Af3</shortName>
    </alternativeName>
    <alternativeName>
        <fullName>Isf-3</fullName>
    </alternativeName>
</protein>
<feature type="chain" id="PRO_0000332944" description="Iron-sulfur flavoprotein AF_1896">
    <location>
        <begin position="1"/>
        <end position="201"/>
    </location>
</feature>
<feature type="binding site" evidence="1">
    <location>
        <position position="46"/>
    </location>
    <ligand>
        <name>[4Fe-4S] cluster</name>
        <dbReference type="ChEBI" id="CHEBI:49883"/>
    </ligand>
</feature>
<feature type="binding site" evidence="1">
    <location>
        <position position="49"/>
    </location>
    <ligand>
        <name>[4Fe-4S] cluster</name>
        <dbReference type="ChEBI" id="CHEBI:49883"/>
    </ligand>
</feature>
<feature type="binding site" evidence="1">
    <location>
        <position position="52"/>
    </location>
    <ligand>
        <name>[4Fe-4S] cluster</name>
        <dbReference type="ChEBI" id="CHEBI:49883"/>
    </ligand>
</feature>
<feature type="binding site" evidence="1">
    <location>
        <position position="57"/>
    </location>
    <ligand>
        <name>[4Fe-4S] cluster</name>
        <dbReference type="ChEBI" id="CHEBI:49883"/>
    </ligand>
</feature>
<dbReference type="EMBL" id="AE000782">
    <property type="protein sequence ID" value="AAB89371.1"/>
    <property type="molecule type" value="Genomic_DNA"/>
</dbReference>
<dbReference type="PIR" id="G69486">
    <property type="entry name" value="G69486"/>
</dbReference>
<dbReference type="RefSeq" id="WP_010879389.1">
    <property type="nucleotide sequence ID" value="NC_000917.1"/>
</dbReference>
<dbReference type="SMR" id="O28383"/>
<dbReference type="STRING" id="224325.AF_1896"/>
<dbReference type="PaxDb" id="224325-AF_1896"/>
<dbReference type="DNASU" id="1485119"/>
<dbReference type="EnsemblBacteria" id="AAB89371">
    <property type="protein sequence ID" value="AAB89371"/>
    <property type="gene ID" value="AF_1896"/>
</dbReference>
<dbReference type="KEGG" id="afu:AF_1896"/>
<dbReference type="eggNOG" id="arCOG02573">
    <property type="taxonomic scope" value="Archaea"/>
</dbReference>
<dbReference type="HOGENOM" id="CLU_050993_1_0_2"/>
<dbReference type="OrthoDB" id="9059at2157"/>
<dbReference type="PhylomeDB" id="O28383"/>
<dbReference type="Proteomes" id="UP000002199">
    <property type="component" value="Chromosome"/>
</dbReference>
<dbReference type="GO" id="GO:0051539">
    <property type="term" value="F:4 iron, 4 sulfur cluster binding"/>
    <property type="evidence" value="ECO:0007669"/>
    <property type="project" value="UniProtKB-KW"/>
</dbReference>
<dbReference type="GO" id="GO:0046872">
    <property type="term" value="F:metal ion binding"/>
    <property type="evidence" value="ECO:0007669"/>
    <property type="project" value="UniProtKB-KW"/>
</dbReference>
<dbReference type="GO" id="GO:0016491">
    <property type="term" value="F:oxidoreductase activity"/>
    <property type="evidence" value="ECO:0007669"/>
    <property type="project" value="InterPro"/>
</dbReference>
<dbReference type="Gene3D" id="3.40.50.360">
    <property type="match status" value="1"/>
</dbReference>
<dbReference type="InterPro" id="IPR029039">
    <property type="entry name" value="Flavoprotein-like_sf"/>
</dbReference>
<dbReference type="InterPro" id="IPR005025">
    <property type="entry name" value="FMN_Rdtase-like_dom"/>
</dbReference>
<dbReference type="InterPro" id="IPR051796">
    <property type="entry name" value="ISF_SsuE-like"/>
</dbReference>
<dbReference type="PANTHER" id="PTHR43278:SF1">
    <property type="entry name" value="IRON-SULFUR FLAVOPROTEIN MJ1083"/>
    <property type="match status" value="1"/>
</dbReference>
<dbReference type="PANTHER" id="PTHR43278">
    <property type="entry name" value="NAD(P)H-DEPENDENT FMN-CONTAINING OXIDOREDUCTASE YWQN-RELATED"/>
    <property type="match status" value="1"/>
</dbReference>
<dbReference type="Pfam" id="PF03358">
    <property type="entry name" value="FMN_red"/>
    <property type="match status" value="1"/>
</dbReference>
<dbReference type="SUPFAM" id="SSF52218">
    <property type="entry name" value="Flavoproteins"/>
    <property type="match status" value="1"/>
</dbReference>
<organism>
    <name type="scientific">Archaeoglobus fulgidus (strain ATCC 49558 / DSM 4304 / JCM 9628 / NBRC 100126 / VC-16)</name>
    <dbReference type="NCBI Taxonomy" id="224325"/>
    <lineage>
        <taxon>Archaea</taxon>
        <taxon>Methanobacteriati</taxon>
        <taxon>Methanobacteriota</taxon>
        <taxon>Archaeoglobi</taxon>
        <taxon>Archaeoglobales</taxon>
        <taxon>Archaeoglobaceae</taxon>
        <taxon>Archaeoglobus</taxon>
    </lineage>
</organism>
<sequence length="201" mass="22027">MKLLAINGSPNKRNTLFLLEVIAEEVKKLGHEAEIIHLKDYEIKECKGCDACLKGDCSQKDDIYKVLEKMQEADAIVIGTPTYFGNVTGIVKNLIDRSRMARMGNYRLRNRVFAPVVTSGLRNGGAEYAAMSLIVYALGQAMLPVSIVENPITTGTFPVGVIQGDAGWRSVKKDEIAINSAKALAKRIVEVAEATKNLRES</sequence>
<gene>
    <name type="ordered locus">AF_1896</name>
</gene>
<accession>O28383</accession>
<reference key="1">
    <citation type="journal article" date="1997" name="Nature">
        <title>The complete genome sequence of the hyperthermophilic, sulphate-reducing archaeon Archaeoglobus fulgidus.</title>
        <authorList>
            <person name="Klenk H.-P."/>
            <person name="Clayton R.A."/>
            <person name="Tomb J.-F."/>
            <person name="White O."/>
            <person name="Nelson K.E."/>
            <person name="Ketchum K.A."/>
            <person name="Dodson R.J."/>
            <person name="Gwinn M.L."/>
            <person name="Hickey E.K."/>
            <person name="Peterson J.D."/>
            <person name="Richardson D.L."/>
            <person name="Kerlavage A.R."/>
            <person name="Graham D.E."/>
            <person name="Kyrpides N.C."/>
            <person name="Fleischmann R.D."/>
            <person name="Quackenbush J."/>
            <person name="Lee N.H."/>
            <person name="Sutton G.G."/>
            <person name="Gill S.R."/>
            <person name="Kirkness E.F."/>
            <person name="Dougherty B.A."/>
            <person name="McKenney K."/>
            <person name="Adams M.D."/>
            <person name="Loftus B.J."/>
            <person name="Peterson S.N."/>
            <person name="Reich C.I."/>
            <person name="McNeil L.K."/>
            <person name="Badger J.H."/>
            <person name="Glodek A."/>
            <person name="Zhou L."/>
            <person name="Overbeek R."/>
            <person name="Gocayne J.D."/>
            <person name="Weidman J.F."/>
            <person name="McDonald L.A."/>
            <person name="Utterback T.R."/>
            <person name="Cotton M.D."/>
            <person name="Spriggs T."/>
            <person name="Artiach P."/>
            <person name="Kaine B.P."/>
            <person name="Sykes S.M."/>
            <person name="Sadow P.W."/>
            <person name="D'Andrea K.P."/>
            <person name="Bowman C."/>
            <person name="Fujii C."/>
            <person name="Garland S.A."/>
            <person name="Mason T.M."/>
            <person name="Olsen G.J."/>
            <person name="Fraser C.M."/>
            <person name="Smith H.O."/>
            <person name="Woese C.R."/>
            <person name="Venter J.C."/>
        </authorList>
    </citation>
    <scope>NUCLEOTIDE SEQUENCE [LARGE SCALE GENOMIC DNA]</scope>
    <source>
        <strain>ATCC 49558 / DSM 4304 / JCM 9628 / NBRC 100126 / VC-16</strain>
    </source>
</reference>
<reference key="2">
    <citation type="journal article" date="2001" name="J. Bacteriol.">
        <title>Iron-sulfur flavoprotein (Isf) from Methanosarcina thermophila is the prototype of a widely distributed family.</title>
        <authorList>
            <person name="Zhao T."/>
            <person name="Cruz F."/>
            <person name="Ferry J.G."/>
        </authorList>
    </citation>
    <scope>PROTEIN SEQUENCE OF N-TERMINUS</scope>
    <scope>COFACTOR</scope>
    <scope>IRON-SULFUR CLUSTER</scope>
</reference>
<reference key="3">
    <citation type="journal article" date="2000" name="J. Bacteriol.">
        <title>Site-specific mutational analysis of a novel cysteine motif proposed to ligate the 4Fe-4S cluster in the iron-sulfur flavoprotein of the thermophilic methanoarchaeon Methanosarcina thermophila.</title>
        <authorList>
            <person name="Leartsakulpanich U."/>
            <person name="Antonkine M.L."/>
            <person name="Ferry J.G."/>
        </authorList>
    </citation>
    <scope>PROTEIN FAMILY</scope>
</reference>